<feature type="initiator methionine" description="Removed" evidence="14 17">
    <location>
        <position position="1"/>
    </location>
</feature>
<feature type="chain" id="PRO_0000153810" description="Small ribosomal subunit protein eS19">
    <location>
        <begin position="2"/>
        <end position="145"/>
    </location>
</feature>
<feature type="modified residue" description="N6-acetyllysine" evidence="22">
    <location>
        <position position="23"/>
    </location>
</feature>
<feature type="modified residue" description="Omega-N-methylarginine" evidence="23">
    <location>
        <position position="67"/>
    </location>
</feature>
<feature type="modified residue" description="N6-acetyllysine" evidence="22">
    <location>
        <position position="111"/>
    </location>
</feature>
<feature type="modified residue" description="N6-acetyllysine" evidence="1">
    <location>
        <position position="115"/>
    </location>
</feature>
<feature type="modified residue" description="N6-succinyllysine" evidence="1">
    <location>
        <position position="143"/>
    </location>
</feature>
<feature type="sequence variant" id="VAR_055436" description="In DBA1.">
    <location>
        <begin position="9"/>
        <end position="14"/>
    </location>
</feature>
<feature type="sequence variant" id="VAR_018438" description="In DBA1; affects protein stability; does not localize to the nucleolus; dbSNP:rs104894717." evidence="2 4 9">
    <original>V</original>
    <variation>F</variation>
    <location>
        <position position="15"/>
    </location>
</feature>
<feature type="sequence variant" id="VAR_046145" description="In DBA1; dbSNP:rs782329429." evidence="16">
    <original>A</original>
    <variation>P</variation>
    <location>
        <position position="17"/>
    </location>
</feature>
<feature type="sequence variant" id="VAR_055437" description="In DBA1.">
    <original>LA</original>
    <variation>E</variation>
    <location>
        <begin position="18"/>
        <end position="19"/>
    </location>
</feature>
<feature type="sequence variant" id="VAR_018439" description="In DBA1; affects protein stability; does not localize to the nucleolus; affects assembly into a functional ribosomal subunit." evidence="3 9">
    <original>L</original>
    <variation>P</variation>
    <location>
        <position position="18"/>
    </location>
</feature>
<feature type="sequence variant" id="VAR_046146" description="In DBA1." evidence="7">
    <original>L</original>
    <variation>R</variation>
    <location>
        <position position="18"/>
    </location>
</feature>
<feature type="sequence variant" id="VAR_055438" description="In DBA1." evidence="10">
    <original>F</original>
    <variation>S</variation>
    <location>
        <position position="21"/>
    </location>
</feature>
<feature type="sequence variant" id="VAR_018440" description="In DBA1; affects assembly into a functional ribosomal subunit." evidence="3 9">
    <original>P</original>
    <variation>L</variation>
    <location>
        <position position="47"/>
    </location>
</feature>
<feature type="sequence variant" id="VAR_055439" description="In DBA1." evidence="10">
    <original>W</original>
    <variation>C</variation>
    <location>
        <position position="52"/>
    </location>
</feature>
<feature type="sequence variant" id="VAR_018441" description="In DBA1; affects assembly into a functional ribosomal subunit." evidence="9 15">
    <original>W</original>
    <variation>R</variation>
    <location>
        <position position="52"/>
    </location>
</feature>
<feature type="sequence variant" id="VAR_018442" description="In DBA1; dbSNP:rs147508369." evidence="4">
    <original>T</original>
    <variation>M</variation>
    <location>
        <position position="55"/>
    </location>
</feature>
<feature type="sequence variant" id="VAR_018437" description="In DBA1; affects assembly into a functional ribosomal subunit." evidence="2 7 9">
    <original>R</original>
    <variation>Q</variation>
    <location>
        <position position="56"/>
    </location>
</feature>
<feature type="sequence variant" id="VAR_055440" description="In DBA1; affects protein stability; does not localize to the nucleolus; affects assembly into a functional ribosomal subunit." evidence="9">
    <original>A</original>
    <variation>P</variation>
    <location>
        <position position="57"/>
    </location>
</feature>
<feature type="sequence variant" id="VAR_046147" description="In DBA1." evidence="7">
    <location>
        <begin position="58"/>
        <end position="60"/>
    </location>
</feature>
<feature type="sequence variant" id="VAR_046148" description="In DBA1." evidence="7">
    <original>S</original>
    <variation>F</variation>
    <location>
        <position position="59"/>
    </location>
</feature>
<feature type="sequence variant" id="VAR_018443" description="In DBA1; does not localize to the nucleolus; affects assembly into a functional ribosomal subunit." evidence="2 9">
    <original>A</original>
    <variation>E</variation>
    <location>
        <position position="61"/>
    </location>
</feature>
<feature type="sequence variant" id="VAR_018444" description="In DBA1; affects assembly into a functional ribosomal subunit; dbSNP:rs1555841301." evidence="5 7 9">
    <original>R</original>
    <variation>Q</variation>
    <location>
        <position position="62"/>
    </location>
</feature>
<feature type="sequence variant" id="VAR_006924" description="In DBA1; increased protein degradation; affects assembly into a functional ribosomal subunit; dbSNP:rs104894711." evidence="2 3 9 15">
    <original>R</original>
    <variation>W</variation>
    <location>
        <position position="62"/>
    </location>
</feature>
<feature type="sequence variant" id="VAR_055441" description="In DBA1." evidence="10">
    <original>L</original>
    <variation>P</variation>
    <location>
        <position position="64"/>
    </location>
</feature>
<feature type="sequence variant" id="VAR_055442" description="In DBA1." evidence="10">
    <original>T</original>
    <variation>P</variation>
    <location>
        <position position="76"/>
    </location>
</feature>
<feature type="sequence variant" id="VAR_055443" description="In DBA1.">
    <original>IYGGRQ</original>
    <variation>R</variation>
    <location>
        <begin position="78"/>
        <end position="83"/>
    </location>
</feature>
<feature type="sequence variant" id="VAR_018445" description="In DBA1; increased protein degradation; affects assembly into a functional ribosomal subunit." evidence="2 7 9">
    <original>R</original>
    <variation>H</variation>
    <location>
        <position position="101"/>
    </location>
</feature>
<feature type="sequence variant" id="VAR_018446" description="In DBA1." evidence="2 9">
    <original>G</original>
    <variation>R</variation>
    <location>
        <position position="120"/>
    </location>
</feature>
<feature type="sequence variant" id="VAR_055444" description="In DBA1; affects protein stability; does not localize to the nucleolus; affects assembly into a functional ribosomal subunit; dbSNP:rs786200936." evidence="10">
    <original>G</original>
    <variation>E</variation>
    <location>
        <position position="127"/>
    </location>
</feature>
<feature type="sequence variant" id="VAR_018447" description="In DBA1." evidence="5">
    <original>L</original>
    <variation>P</variation>
    <location>
        <position position="131"/>
    </location>
</feature>
<feature type="sequence variant" id="VAR_046149" description="In DBA1." evidence="7">
    <original>L</original>
    <variation>R</variation>
    <location>
        <position position="131"/>
    </location>
</feature>
<feature type="sequence variant" id="VAR_055445" description="In DBA1." evidence="10">
    <original>A</original>
    <variation>T</variation>
    <location>
        <position position="135"/>
    </location>
</feature>
<feature type="helix" evidence="26">
    <location>
        <begin position="6"/>
        <end position="8"/>
    </location>
</feature>
<feature type="helix" evidence="26">
    <location>
        <begin position="11"/>
        <end position="25"/>
    </location>
</feature>
<feature type="turn" evidence="26">
    <location>
        <begin position="32"/>
        <end position="36"/>
    </location>
</feature>
<feature type="strand" evidence="24">
    <location>
        <begin position="39"/>
        <end position="42"/>
    </location>
</feature>
<feature type="strand" evidence="25">
    <location>
        <begin position="43"/>
        <end position="45"/>
    </location>
</feature>
<feature type="strand" evidence="27">
    <location>
        <begin position="48"/>
        <end position="50"/>
    </location>
</feature>
<feature type="helix" evidence="26">
    <location>
        <begin position="52"/>
        <end position="66"/>
    </location>
</feature>
<feature type="helix" evidence="26">
    <location>
        <begin position="72"/>
        <end position="78"/>
    </location>
</feature>
<feature type="strand" evidence="26">
    <location>
        <begin position="81"/>
        <end position="85"/>
    </location>
</feature>
<feature type="strand" evidence="26">
    <location>
        <begin position="88"/>
        <end position="93"/>
    </location>
</feature>
<feature type="helix" evidence="26">
    <location>
        <begin position="97"/>
        <end position="109"/>
    </location>
</feature>
<feature type="strand" evidence="26">
    <location>
        <begin position="112"/>
        <end position="115"/>
    </location>
</feature>
<feature type="strand" evidence="26">
    <location>
        <begin position="119"/>
        <end position="123"/>
    </location>
</feature>
<feature type="helix" evidence="26">
    <location>
        <begin position="125"/>
        <end position="142"/>
    </location>
</feature>
<gene>
    <name evidence="20" type="primary">RPS19</name>
</gene>
<comment type="function">
    <text evidence="8 12 13">Component of the small ribosomal subunit (PubMed:23636399). The ribosome is a large ribonucleoprotein complex responsible for the synthesis of proteins in the cell (PubMed:23636399). Required for pre-rRNA processing and maturation of 40S ribosomal subunits (PubMed:16990592). Part of the small subunit (SSU) processome, first precursor of the small eukaryotic ribosomal subunit. During the assembly of the SSU processome in the nucleolus, many ribosome biogenesis factors, an RNA chaperone and ribosomal proteins associate with the nascent pre-rRNA and work in concert to generate RNA folding, modifications, rearrangements and cleavage as well as targeted degradation of pre-ribosomal RNA by the RNA exosome (PubMed:34516797).</text>
</comment>
<comment type="subunit">
    <text evidence="1 12 13">Component of the small ribosomal subunit (PubMed:23636399). Part of the small subunit (SSU) processome, composed of more than 70 proteins and the RNA chaperone small nucleolar RNA (snoRNA) U3. Interacts with RPS19BP1; the interaction is direct and mediates the integration of RPS19 in state post-A1 (PubMed:34516797). Interacts with RPS19BP1 (By similarity).</text>
</comment>
<comment type="subunit">
    <text evidence="11">(Microbial infection) Interacts with Sin nombre virus nucleoprotein (via N-terminus); this interaction probably mediates the loading of the 40S ribosomal subunit on viral capped mRNA during N-mediated translation initiation.</text>
</comment>
<comment type="interaction">
    <interactant intactId="EBI-354451">
        <id>P39019</id>
    </interactant>
    <interactant intactId="EBI-930964">
        <id>P54253</id>
        <label>ATXN1</label>
    </interactant>
    <organismsDiffer>false</organismsDiffer>
    <experiments>3</experiments>
</comment>
<comment type="interaction">
    <interactant intactId="EBI-354451">
        <id>P39019</id>
    </interactant>
    <interactant intactId="EBI-5327611">
        <id>P16401</id>
        <label>H1-5</label>
    </interactant>
    <organismsDiffer>false</organismsDiffer>
    <experiments>2</experiments>
</comment>
<comment type="interaction">
    <interactant intactId="EBI-354451">
        <id>P39019</id>
    </interactant>
    <interactant intactId="EBI-466029">
        <id>P42858</id>
        <label>HTT</label>
    </interactant>
    <organismsDiffer>false</organismsDiffer>
    <experiments>3</experiments>
</comment>
<comment type="interaction">
    <interactant intactId="EBI-354451">
        <id>P39019</id>
    </interactant>
    <interactant intactId="EBI-696621">
        <id>P11309</id>
        <label>PIM1</label>
    </interactant>
    <organismsDiffer>false</organismsDiffer>
    <experiments>7</experiments>
</comment>
<comment type="interaction">
    <interactant intactId="EBI-354451">
        <id>P39019</id>
    </interactant>
    <interactant intactId="EBI-352480">
        <id>P62249</id>
        <label>RPS16</label>
    </interactant>
    <organismsDiffer>false</organismsDiffer>
    <experiments>4</experiments>
</comment>
<comment type="interaction">
    <interactant intactId="EBI-354451">
        <id>P39019</id>
    </interactant>
    <interactant intactId="EBI-742688">
        <id>Q9NZD8</id>
        <label>SPG21</label>
    </interactant>
    <organismsDiffer>false</organismsDiffer>
    <experiments>3</experiments>
</comment>
<comment type="subcellular location">
    <subcellularLocation>
        <location evidence="12">Cytoplasm</location>
    </subcellularLocation>
    <subcellularLocation>
        <location evidence="4 9 13">Nucleus</location>
        <location evidence="4 9 13">Nucleolus</location>
    </subcellularLocation>
</comment>
<comment type="tissue specificity">
    <text evidence="6">Higher level expression is seen in the colon carcinoma tissue than normal colon tissue.</text>
</comment>
<comment type="disease" evidence="2 3 4 5 7 9 10 15 16">
    <disease id="DI-00392">
        <name>Diamond-Blackfan anemia 1</name>
        <acronym>DBA1</acronym>
        <description>A form of Diamond-Blackfan anemia, a congenital non-regenerative hypoplastic anemia that usually presents early in infancy. Diamond-Blackfan anemia is characterized by a moderate to severe macrocytic anemia, erythroblastopenia, and an increased risk of developing leukemia. 30 to 40% of Diamond-Blackfan anemia patients present with short stature and congenital anomalies, the most frequent being craniofacial (Pierre-Robin syndrome and cleft palate), thumb and urogenital anomalies.</description>
        <dbReference type="MIM" id="105650"/>
    </disease>
    <text>The disease is caused by variants affecting the gene represented in this entry.</text>
</comment>
<comment type="similarity">
    <text evidence="19">Belongs to the eukaryotic ribosomal protein eS19 family.</text>
</comment>
<sequence length="145" mass="16060">MPGVTVKDVNQQEFVRALAAFLKKSGKLKVPEWVDTVKLAKHKELAPYDENWFYTRAASTARHLYLRGGAGVGSMTKIYGGRQRNGVMPSHFSRGSKSVARRVLQALEGLKMVEKDQDGGRKLTPQGQRDLDRIAGQVAAANKKH</sequence>
<name>RS19_HUMAN</name>
<keyword id="KW-0002">3D-structure</keyword>
<keyword id="KW-0007">Acetylation</keyword>
<keyword id="KW-0963">Cytoplasm</keyword>
<keyword id="KW-1024">Diamond-Blackfan anemia</keyword>
<keyword id="KW-0903">Direct protein sequencing</keyword>
<keyword id="KW-0225">Disease variant</keyword>
<keyword id="KW-0945">Host-virus interaction</keyword>
<keyword id="KW-0488">Methylation</keyword>
<keyword id="KW-0539">Nucleus</keyword>
<keyword id="KW-1267">Proteomics identification</keyword>
<keyword id="KW-1185">Reference proteome</keyword>
<keyword id="KW-0687">Ribonucleoprotein</keyword>
<keyword id="KW-0689">Ribosomal protein</keyword>
<proteinExistence type="evidence at protein level"/>
<protein>
    <recommendedName>
        <fullName evidence="18">Small ribosomal subunit protein eS19</fullName>
    </recommendedName>
    <alternativeName>
        <fullName>40S ribosomal protein S19</fullName>
    </alternativeName>
</protein>
<organism>
    <name type="scientific">Homo sapiens</name>
    <name type="common">Human</name>
    <dbReference type="NCBI Taxonomy" id="9606"/>
    <lineage>
        <taxon>Eukaryota</taxon>
        <taxon>Metazoa</taxon>
        <taxon>Chordata</taxon>
        <taxon>Craniata</taxon>
        <taxon>Vertebrata</taxon>
        <taxon>Euteleostomi</taxon>
        <taxon>Mammalia</taxon>
        <taxon>Eutheria</taxon>
        <taxon>Euarchontoglires</taxon>
        <taxon>Primates</taxon>
        <taxon>Haplorrhini</taxon>
        <taxon>Catarrhini</taxon>
        <taxon>Hominidae</taxon>
        <taxon>Homo</taxon>
    </lineage>
</organism>
<accession>P39019</accession>
<reference key="1">
    <citation type="journal article" date="1992" name="Cancer Res.">
        <title>Differential expression of S19 ribosomal protein, laminin-binding protein, and human lymphocyte antigen class I messenger RNAs associated with colon carcinoma progression and differentiation.</title>
        <authorList>
            <person name="Kondoh N."/>
            <person name="Schweinfest C.W."/>
            <person name="Henderson K.W."/>
            <person name="Papas T.S."/>
        </authorList>
    </citation>
    <scope>NUCLEOTIDE SEQUENCE [MRNA]</scope>
    <scope>TISSUE SPECIFICITY</scope>
</reference>
<reference key="2">
    <citation type="journal article" date="1999" name="Nat. Genet.">
        <title>The gene encoding ribosomal protein S19 is mutated in Diamond-Blackfan anaemia.</title>
        <authorList>
            <person name="Draptchinskaia N."/>
            <person name="Gustavsson P."/>
            <person name="Andersson B."/>
            <person name="Pettersson M."/>
            <person name="Willig T.-N.D."/>
            <person name="Dianzani I."/>
            <person name="Ball S."/>
            <person name="Tchernia G."/>
            <person name="Klar J."/>
            <person name="Matsson H."/>
            <person name="Tentler D."/>
            <person name="Mohandas N."/>
            <person name="Carlsson B."/>
            <person name="Dahl N."/>
        </authorList>
    </citation>
    <scope>NUCLEOTIDE SEQUENCE [GENOMIC DNA]</scope>
    <scope>VARIANTS DBA1 ARG-52 AND TRP-62</scope>
</reference>
<reference key="3">
    <citation type="journal article" date="2004" name="Genome Res.">
        <title>The status, quality, and expansion of the NIH full-length cDNA project: the Mammalian Gene Collection (MGC).</title>
        <authorList>
            <consortium name="The MGC Project Team"/>
        </authorList>
    </citation>
    <scope>NUCLEOTIDE SEQUENCE [LARGE SCALE MRNA]</scope>
    <source>
        <tissue>Colon</tissue>
        <tissue>Eye</tissue>
        <tissue>Placenta</tissue>
    </source>
</reference>
<reference key="4">
    <citation type="journal article" date="1996" name="Eur. J. Biochem.">
        <title>Characterization of the human small-ribosomal-subunit proteins by N-terminal and internal sequencing, and mass spectrometry.</title>
        <authorList>
            <person name="Vladimirov S.N."/>
            <person name="Ivanov A.V."/>
            <person name="Karpova G.G."/>
            <person name="Musolyamov A.K."/>
            <person name="Egorov T.A."/>
            <person name="Thiede B."/>
            <person name="Wittmann-Liebold B."/>
            <person name="Otto A."/>
        </authorList>
    </citation>
    <scope>PROTEIN SEQUENCE OF 2-11</scope>
    <source>
        <tissue>Placenta</tissue>
    </source>
</reference>
<reference key="5">
    <citation type="submission" date="2009-12" db="UniProtKB">
        <authorList>
            <person name="Bienvenut W.V."/>
            <person name="Calvo F."/>
            <person name="Kolch W."/>
            <person name="Lourenco F."/>
            <person name="Olson M.F."/>
        </authorList>
    </citation>
    <scope>PROTEIN SEQUENCE OF 2-24; 30-38; 83-94; 102-111 AND 134-145</scope>
    <scope>CLEAVAGE OF INITIATOR METHIONINE</scope>
    <scope>IDENTIFICATION BY MASS SPECTROMETRY</scope>
    <source>
        <tissue>Cervix carcinoma</tissue>
        <tissue>Mammary carcinoma</tissue>
    </source>
</reference>
<reference key="6">
    <citation type="journal article" date="1998" name="Genome Res.">
        <title>A map of 75 human ribosomal protein genes.</title>
        <authorList>
            <person name="Kenmochi N."/>
            <person name="Kawaguchi T."/>
            <person name="Rozen S."/>
            <person name="Davis E."/>
            <person name="Goodman N."/>
            <person name="Hudson T.J."/>
            <person name="Tanaka T."/>
            <person name="Page D.C."/>
        </authorList>
    </citation>
    <scope>NUCLEOTIDE SEQUENCE [GENOMIC DNA] OF 120-137</scope>
</reference>
<reference key="7">
    <citation type="journal article" date="2003" name="Nature">
        <title>Proteomic characterization of the human centrosome by protein correlation profiling.</title>
        <authorList>
            <person name="Andersen J.S."/>
            <person name="Wilkinson C.J."/>
            <person name="Mayor T."/>
            <person name="Mortensen P."/>
            <person name="Nigg E.A."/>
            <person name="Mann M."/>
        </authorList>
    </citation>
    <scope>IDENTIFICATION BY MASS SPECTROMETRY</scope>
    <source>
        <tissue>Lymphoblast</tissue>
    </source>
</reference>
<reference key="8">
    <citation type="journal article" date="2004" name="Haematologica">
        <title>Molecular basis of Diamond-Blackfan anemia: new findings from the Italian registry and a review of the literature.</title>
        <authorList>
            <person name="Campagnoli M.F."/>
            <person name="Garelli E."/>
            <person name="Quarello P."/>
            <person name="Carando A."/>
            <person name="Varotto S."/>
            <person name="Nobili B."/>
            <person name="Longoni D."/>
            <person name="Pecile V."/>
            <person name="Zecca M."/>
            <person name="Dufour C."/>
            <person name="Ramenghi U."/>
            <person name="Dianzan I."/>
        </authorList>
    </citation>
    <scope>REVIEW ON DBA1 VARIANTS</scope>
</reference>
<reference key="9">
    <citation type="journal article" date="2007" name="Blood">
        <title>Human RPS19, the gene mutated in Diamond-Blackfan anemia, encodes a ribosomal protein required for the maturation of 40S ribosomal subunits.</title>
        <authorList>
            <person name="Flygare J."/>
            <person name="Aspesi A."/>
            <person name="Bailey J.C."/>
            <person name="Miyake K."/>
            <person name="Caffrey J.M."/>
            <person name="Karlsson S."/>
            <person name="Ellis S.R."/>
        </authorList>
    </citation>
    <scope>FUNCTION</scope>
</reference>
<reference key="10">
    <citation type="journal article" date="2007" name="Hum. Mol. Genet.">
        <title>Missense mutations associated with Diamond-Blackfan anemia affect the assembly of ribosomal protein S19 into the ribosome.</title>
        <authorList>
            <person name="Angelini M."/>
            <person name="Cannata S."/>
            <person name="Mercaldo V."/>
            <person name="Gibello L."/>
            <person name="Santoro C."/>
            <person name="Dianzani I."/>
            <person name="Loreni F."/>
        </authorList>
    </citation>
    <scope>SUBCELLULAR LOCATION</scope>
    <scope>CHARACTERIZATION OF VARIANTS DBA1 PHE-15; PRO-18; LEU-47; ARG-52; GLN-56; PRO-57; GLU-61; GLN-62; TRP-62; HIS-101 AND ARG-120</scope>
</reference>
<reference key="11">
    <citation type="journal article" date="2008" name="Hum. Mutat.">
        <title>RPS19 mutations in patients with Diamond-Blackfan anemia.</title>
        <authorList>
            <person name="Campagnoli M.F."/>
            <person name="Ramenghi U."/>
            <person name="Armiraglio M."/>
            <person name="Quarello P."/>
            <person name="Garelli E."/>
            <person name="Carando A."/>
            <person name="Avondo F."/>
            <person name="Pavesi E."/>
            <person name="Fribourg S."/>
            <person name="Gleizes P.E."/>
            <person name="Loreni F."/>
            <person name="Dianzani I."/>
        </authorList>
    </citation>
    <scope>VARIANTS DBA1 SER-21; CYS-52; PRO-64; PRO-76; GLU-127 AND THR-135</scope>
</reference>
<reference key="12">
    <citation type="journal article" date="2009" name="Science">
        <title>Lysine acetylation targets protein complexes and co-regulates major cellular functions.</title>
        <authorList>
            <person name="Choudhary C."/>
            <person name="Kumar C."/>
            <person name="Gnad F."/>
            <person name="Nielsen M.L."/>
            <person name="Rehman M."/>
            <person name="Walther T.C."/>
            <person name="Olsen J.V."/>
            <person name="Mann M."/>
        </authorList>
    </citation>
    <scope>ACETYLATION [LARGE SCALE ANALYSIS] AT LYS-23 AND LYS-111</scope>
    <scope>IDENTIFICATION BY MASS SPECTROMETRY [LARGE SCALE ANALYSIS]</scope>
</reference>
<reference key="13">
    <citation type="journal article" date="2010" name="J. Virol.">
        <title>Interaction of hantavirus nucleocapsid protein with ribosomal protein S19.</title>
        <authorList>
            <person name="Haque A."/>
            <person name="Mir M.A."/>
        </authorList>
    </citation>
    <scope>INTERACTION WITH SIN NOMBRE HANTAVIRUS NUCLEOPROTEIN (MICROBIAL INFECTION)</scope>
</reference>
<reference key="14">
    <citation type="journal article" date="2011" name="BMC Syst. Biol.">
        <title>Initial characterization of the human central proteome.</title>
        <authorList>
            <person name="Burkard T.R."/>
            <person name="Planyavsky M."/>
            <person name="Kaupe I."/>
            <person name="Breitwieser F.P."/>
            <person name="Buerckstuemmer T."/>
            <person name="Bennett K.L."/>
            <person name="Superti-Furga G."/>
            <person name="Colinge J."/>
        </authorList>
    </citation>
    <scope>IDENTIFICATION BY MASS SPECTROMETRY [LARGE SCALE ANALYSIS]</scope>
</reference>
<reference key="15">
    <citation type="journal article" date="2012" name="Proc. Natl. Acad. Sci. U.S.A.">
        <title>N-terminal acetylome analyses and functional insights of the N-terminal acetyltransferase NatB.</title>
        <authorList>
            <person name="Van Damme P."/>
            <person name="Lasa M."/>
            <person name="Polevoda B."/>
            <person name="Gazquez C."/>
            <person name="Elosegui-Artola A."/>
            <person name="Kim D.S."/>
            <person name="De Juan-Pardo E."/>
            <person name="Demeyer K."/>
            <person name="Hole K."/>
            <person name="Larrea E."/>
            <person name="Timmerman E."/>
            <person name="Prieto J."/>
            <person name="Arnesen T."/>
            <person name="Sherman F."/>
            <person name="Gevaert K."/>
            <person name="Aldabe R."/>
        </authorList>
    </citation>
    <scope>IDENTIFICATION BY MASS SPECTROMETRY [LARGE SCALE ANALYSIS]</scope>
</reference>
<reference key="16">
    <citation type="journal article" date="2014" name="Curr. Opin. Struct. Biol.">
        <title>A new system for naming ribosomal proteins.</title>
        <authorList>
            <person name="Ban N."/>
            <person name="Beckmann R."/>
            <person name="Cate J.H.D."/>
            <person name="Dinman J.D."/>
            <person name="Dragon F."/>
            <person name="Ellis S.R."/>
            <person name="Lafontaine D.L.J."/>
            <person name="Lindahl L."/>
            <person name="Liljas A."/>
            <person name="Lipton J.M."/>
            <person name="McAlear M.A."/>
            <person name="Moore P.B."/>
            <person name="Noller H.F."/>
            <person name="Ortega J."/>
            <person name="Panse V.G."/>
            <person name="Ramakrishnan V."/>
            <person name="Spahn C.M.T."/>
            <person name="Steitz T.A."/>
            <person name="Tchorzewski M."/>
            <person name="Tollervey D."/>
            <person name="Warren A.J."/>
            <person name="Williamson J.R."/>
            <person name="Wilson D."/>
            <person name="Yonath A."/>
            <person name="Yusupov M."/>
        </authorList>
    </citation>
    <scope>NOMENCLATURE</scope>
</reference>
<reference key="17">
    <citation type="journal article" date="2014" name="Biochem. J.">
        <title>Ribosomal protein S19-binding domain provides insights into hantavirus nucleocapsid protein-mediated translation initiation mechanism.</title>
        <authorList>
            <person name="Ganaie S.S."/>
            <person name="Haque A."/>
            <person name="Cheng E."/>
            <person name="Bonny T.S."/>
            <person name="Salim N.N."/>
            <person name="Mir M.A."/>
        </authorList>
    </citation>
    <scope>INTERACTION WITH SIN NOMBRE VIRUS NUCLEOPROTEIN (MICROBIAL INFECTION)</scope>
</reference>
<reference key="18">
    <citation type="journal article" date="2014" name="Mol. Cell. Proteomics">
        <title>Immunoaffinity enrichment and mass spectrometry analysis of protein methylation.</title>
        <authorList>
            <person name="Guo A."/>
            <person name="Gu H."/>
            <person name="Zhou J."/>
            <person name="Mulhern D."/>
            <person name="Wang Y."/>
            <person name="Lee K.A."/>
            <person name="Yang V."/>
            <person name="Aguiar M."/>
            <person name="Kornhauser J."/>
            <person name="Jia X."/>
            <person name="Ren J."/>
            <person name="Beausoleil S.A."/>
            <person name="Silva J.C."/>
            <person name="Vemulapalli V."/>
            <person name="Bedford M.T."/>
            <person name="Comb M.J."/>
        </authorList>
    </citation>
    <scope>METHYLATION [LARGE SCALE ANALYSIS] AT ARG-67</scope>
    <scope>IDENTIFICATION BY MASS SPECTROMETRY [LARGE SCALE ANALYSIS]</scope>
    <source>
        <tissue>Colon carcinoma</tissue>
    </source>
</reference>
<reference key="19">
    <citation type="journal article" date="2015" name="Proteomics">
        <title>N-terminome analysis of the human mitochondrial proteome.</title>
        <authorList>
            <person name="Vaca Jacome A.S."/>
            <person name="Rabilloud T."/>
            <person name="Schaeffer-Reiss C."/>
            <person name="Rompais M."/>
            <person name="Ayoub D."/>
            <person name="Lane L."/>
            <person name="Bairoch A."/>
            <person name="Van Dorsselaer A."/>
            <person name="Carapito C."/>
        </authorList>
    </citation>
    <scope>IDENTIFICATION BY MASS SPECTROMETRY [LARGE SCALE ANALYSIS]</scope>
</reference>
<reference key="20">
    <citation type="journal article" date="2013" name="Nature">
        <title>Structures of the human and Drosophila 80S ribosome.</title>
        <authorList>
            <person name="Anger A.M."/>
            <person name="Armache J.P."/>
            <person name="Berninghausen O."/>
            <person name="Habeck M."/>
            <person name="Subklewe M."/>
            <person name="Wilson D.N."/>
            <person name="Beckmann R."/>
        </authorList>
    </citation>
    <scope>STRUCTURE BY ELECTRON MICROSCOPY (5.0 ANGSTROMS) OF RIBOSOME</scope>
    <scope>FUNCTION</scope>
    <scope>SUBUNIT</scope>
    <scope>SUBCELLULAR LOCATION</scope>
</reference>
<reference evidence="21" key="21">
    <citation type="journal article" date="2021" name="Science">
        <title>Nucleolar maturation of the human small subunit processome.</title>
        <authorList>
            <person name="Singh S."/>
            <person name="Vanden Broeck A."/>
            <person name="Miller L."/>
            <person name="Chaker-Margot M."/>
            <person name="Klinge S."/>
        </authorList>
    </citation>
    <scope>STRUCTURE BY ELECTRON MICROSCOPY (2.70 ANGSTROMS)</scope>
    <scope>FUNCTION</scope>
    <scope>SUBCELLULAR LOCATION</scope>
    <scope>SUBUNIT</scope>
</reference>
<reference key="22">
    <citation type="journal article" date="1999" name="Blood">
        <title>Mutations in ribosomal protein S19 gene and Diamond Blackfan anemia: wide variations in phenotypic expression.</title>
        <authorList>
            <person name="Willig T.-N.D."/>
            <person name="Draptchinskaia N."/>
            <person name="Dianzani I."/>
            <person name="Ball S."/>
            <person name="Niemeyer C."/>
            <person name="Ramenghi U."/>
            <person name="Orfali K."/>
            <person name="Gustavsson P."/>
            <person name="Garelli E."/>
            <person name="Brusco A."/>
            <person name="Tiemann C."/>
            <person name="Perignon J.L."/>
            <person name="Bouchier C."/>
            <person name="Cicchiello L."/>
            <person name="Dahl N."/>
            <person name="Mohandas N."/>
            <person name="Tchernia G."/>
        </authorList>
    </citation>
    <scope>VARIANTS DBA1 PHE-15; GLN-56; GLU-61; TRP-62; HIS-101 AND ARG-120</scope>
</reference>
<reference key="23">
    <citation type="journal article" date="2000" name="Blood Cells Mol. Dis.">
        <title>Diamond-Blackfan anemia: report of seven further mutations in the RPS19 gene and evidence of mutation heterogeneity in the Italian population.</title>
        <authorList>
            <person name="Ramenghi U."/>
            <person name="Campagnoli M.F."/>
            <person name="Garelli E."/>
            <person name="Carando A."/>
            <person name="Brusco A."/>
            <person name="Bagnara G.P."/>
            <person name="Strippoli P."/>
            <person name="Izzi G.C."/>
            <person name="Brandalise S."/>
            <person name="Riccardi R."/>
            <person name="Dianzani I."/>
        </authorList>
    </citation>
    <scope>VARIANTS DBA1 PRO-18; LEU-47 AND TRP-62</scope>
</reference>
<reference key="24">
    <citation type="journal article" date="2003" name="Blood">
        <title>Nucleolar localization of RPS19 protein in normal cells and mislocalization due to mutations in the nucleolar localization signals in 2 Diamond-Blackfan anemia patients: potential insights into pathophysiology.</title>
        <authorList>
            <person name="Da Costa L."/>
            <person name="Tchernia G."/>
            <person name="Gascard P."/>
            <person name="Lo A."/>
            <person name="Meerpohl J."/>
            <person name="Niemeyer C."/>
            <person name="Chasis J.-A."/>
            <person name="Fixler J."/>
            <person name="Mohandas N."/>
        </authorList>
    </citation>
    <scope>VARIANTS DBA1 PHE-15 AND MET-55</scope>
    <scope>SUBCELLULAR LOCATION</scope>
</reference>
<reference key="25">
    <citation type="journal article" date="2003" name="Hematol. J.">
        <title>Ten novel Diamond-Blackfan anemia mutations and three polymorphisms within the rps19 gene.</title>
        <authorList>
            <person name="Proust A."/>
            <person name="Da Costa L."/>
            <person name="Rince P."/>
            <person name="Landois A."/>
            <person name="Tamary H."/>
            <person name="Zaizov R."/>
            <person name="Tchernia G."/>
            <person name="Delaunay J."/>
        </authorList>
    </citation>
    <scope>VARIANTS DBA1 GLN-62 AND PRO-131</scope>
</reference>
<reference key="26">
    <citation type="journal article" date="2004" name="Br. J. Haematol.">
        <title>RNA and protein evidence for haplo-insufficiency in Diamond-Blackfan anaemia patients with RPS19 mutations.</title>
        <authorList>
            <person name="Gazda H.T."/>
            <person name="Zhong R."/>
            <person name="Long L."/>
            <person name="Niewiadomska E."/>
            <person name="Lipton J.M."/>
            <person name="Ploszynska A."/>
            <person name="Zaucha J.M."/>
            <person name="Vlachos A."/>
            <person name="Atsidaftos E."/>
            <person name="Viskochil D.H."/>
            <person name="Niemeyer C.M."/>
            <person name="Meerpohl J.J."/>
            <person name="Rokicka-Milewska R."/>
            <person name="Pospisilova D."/>
            <person name="Wiktor-Jedrzejczak W."/>
            <person name="Nathan D.G."/>
            <person name="Beggs A.H."/>
            <person name="Sieff C.A."/>
        </authorList>
    </citation>
    <scope>VARIANTS DBA1 ARG-18; GLN-56; 58-ALA--THR-60 DEL; PHE-59; GLN-62; HIS-101 AND ARG-131</scope>
</reference>
<reference key="27">
    <citation type="journal article" date="2004" name="Hum. Genet.">
        <authorList>
            <person name="Pereira J.C."/>
            <person name="Fiskerstrand T."/>
            <person name="Ribeiro M.L."/>
        </authorList>
    </citation>
    <scope>ERRATUM OF PUBMED:15384984</scope>
    <scope>VARIANT DBA1 PRO-17</scope>
</reference>
<evidence type="ECO:0000250" key="1">
    <source>
        <dbReference type="UniProtKB" id="Q9CZX8"/>
    </source>
</evidence>
<evidence type="ECO:0000269" key="2">
    <source>
    </source>
</evidence>
<evidence type="ECO:0000269" key="3">
    <source>
    </source>
</evidence>
<evidence type="ECO:0000269" key="4">
    <source>
    </source>
</evidence>
<evidence type="ECO:0000269" key="5">
    <source>
    </source>
</evidence>
<evidence type="ECO:0000269" key="6">
    <source>
    </source>
</evidence>
<evidence type="ECO:0000269" key="7">
    <source>
    </source>
</evidence>
<evidence type="ECO:0000269" key="8">
    <source>
    </source>
</evidence>
<evidence type="ECO:0000269" key="9">
    <source>
    </source>
</evidence>
<evidence type="ECO:0000269" key="10">
    <source>
    </source>
</evidence>
<evidence type="ECO:0000269" key="11">
    <source>
    </source>
</evidence>
<evidence type="ECO:0000269" key="12">
    <source>
    </source>
</evidence>
<evidence type="ECO:0000269" key="13">
    <source>
    </source>
</evidence>
<evidence type="ECO:0000269" key="14">
    <source>
    </source>
</evidence>
<evidence type="ECO:0000269" key="15">
    <source>
    </source>
</evidence>
<evidence type="ECO:0000269" key="16">
    <source ref="27"/>
</evidence>
<evidence type="ECO:0000269" key="17">
    <source ref="5"/>
</evidence>
<evidence type="ECO:0000303" key="18">
    <source>
    </source>
</evidence>
<evidence type="ECO:0000305" key="19"/>
<evidence type="ECO:0000312" key="20">
    <source>
        <dbReference type="HGNC" id="HGNC:10402"/>
    </source>
</evidence>
<evidence type="ECO:0007744" key="21">
    <source>
        <dbReference type="PDB" id="7MQA"/>
    </source>
</evidence>
<evidence type="ECO:0007744" key="22">
    <source>
    </source>
</evidence>
<evidence type="ECO:0007744" key="23">
    <source>
    </source>
</evidence>
<evidence type="ECO:0007829" key="24">
    <source>
        <dbReference type="PDB" id="6ZOJ"/>
    </source>
</evidence>
<evidence type="ECO:0007829" key="25">
    <source>
        <dbReference type="PDB" id="6ZV6"/>
    </source>
</evidence>
<evidence type="ECO:0007829" key="26">
    <source>
        <dbReference type="PDB" id="7R4X"/>
    </source>
</evidence>
<evidence type="ECO:0007829" key="27">
    <source>
        <dbReference type="PDB" id="8T4S"/>
    </source>
</evidence>
<dbReference type="EMBL" id="M81757">
    <property type="protein sequence ID" value="AAA89070.1"/>
    <property type="molecule type" value="mRNA"/>
</dbReference>
<dbReference type="EMBL" id="AF092907">
    <property type="protein sequence ID" value="AAD13668.1"/>
    <property type="molecule type" value="Genomic_DNA"/>
</dbReference>
<dbReference type="EMBL" id="AF092906">
    <property type="protein sequence ID" value="AAD13668.1"/>
    <property type="status" value="JOINED"/>
    <property type="molecule type" value="Genomic_DNA"/>
</dbReference>
<dbReference type="EMBL" id="BC000023">
    <property type="protein sequence ID" value="AAH00023.1"/>
    <property type="molecule type" value="mRNA"/>
</dbReference>
<dbReference type="EMBL" id="BC007615">
    <property type="protein sequence ID" value="AAH07615.1"/>
    <property type="molecule type" value="mRNA"/>
</dbReference>
<dbReference type="EMBL" id="BC018616">
    <property type="protein sequence ID" value="AAH18616.1"/>
    <property type="molecule type" value="mRNA"/>
</dbReference>
<dbReference type="EMBL" id="AB007155">
    <property type="protein sequence ID" value="BAA28593.1"/>
    <property type="molecule type" value="Genomic_DNA"/>
</dbReference>
<dbReference type="CCDS" id="CCDS12588.1"/>
<dbReference type="PIR" id="I52692">
    <property type="entry name" value="I52692"/>
</dbReference>
<dbReference type="RefSeq" id="NP_001013.1">
    <property type="nucleotide sequence ID" value="NM_001022.4"/>
</dbReference>
<dbReference type="RefSeq" id="NP_001308412.1">
    <property type="nucleotide sequence ID" value="NM_001321483.2"/>
</dbReference>
<dbReference type="RefSeq" id="NP_001308413.1">
    <property type="nucleotide sequence ID" value="NM_001321484.2"/>
</dbReference>
<dbReference type="PDB" id="4UG0">
    <property type="method" value="EM"/>
    <property type="chains" value="ST=1-145"/>
</dbReference>
<dbReference type="PDB" id="4V6X">
    <property type="method" value="EM"/>
    <property type="resolution" value="5.00 A"/>
    <property type="chains" value="AT=1-145"/>
</dbReference>
<dbReference type="PDB" id="5A2Q">
    <property type="method" value="EM"/>
    <property type="resolution" value="3.90 A"/>
    <property type="chains" value="T=1-145"/>
</dbReference>
<dbReference type="PDB" id="5AJ0">
    <property type="method" value="EM"/>
    <property type="resolution" value="3.50 A"/>
    <property type="chains" value="BT=1-145"/>
</dbReference>
<dbReference type="PDB" id="5FLX">
    <property type="method" value="EM"/>
    <property type="resolution" value="3.90 A"/>
    <property type="chains" value="T=1-145"/>
</dbReference>
<dbReference type="PDB" id="5LKS">
    <property type="method" value="EM"/>
    <property type="resolution" value="3.60 A"/>
    <property type="chains" value="ST=1-145"/>
</dbReference>
<dbReference type="PDB" id="5OA3">
    <property type="method" value="EM"/>
    <property type="resolution" value="4.30 A"/>
    <property type="chains" value="T=1-145"/>
</dbReference>
<dbReference type="PDB" id="5T2C">
    <property type="method" value="EM"/>
    <property type="resolution" value="3.60 A"/>
    <property type="chains" value="AU=1-145"/>
</dbReference>
<dbReference type="PDB" id="5VYC">
    <property type="method" value="X-ray"/>
    <property type="resolution" value="6.00 A"/>
    <property type="chains" value="T1/T2/T3/T4/T5/T6=1-145"/>
</dbReference>
<dbReference type="PDB" id="6G18">
    <property type="method" value="EM"/>
    <property type="resolution" value="3.60 A"/>
    <property type="chains" value="T=1-145"/>
</dbReference>
<dbReference type="PDB" id="6G4S">
    <property type="method" value="EM"/>
    <property type="resolution" value="4.00 A"/>
    <property type="chains" value="T=1-145"/>
</dbReference>
<dbReference type="PDB" id="6G4W">
    <property type="method" value="EM"/>
    <property type="resolution" value="4.50 A"/>
    <property type="chains" value="T=1-145"/>
</dbReference>
<dbReference type="PDB" id="6G51">
    <property type="method" value="EM"/>
    <property type="resolution" value="4.10 A"/>
    <property type="chains" value="T=1-145"/>
</dbReference>
<dbReference type="PDB" id="6G53">
    <property type="method" value="EM"/>
    <property type="resolution" value="4.50 A"/>
    <property type="chains" value="T=1-145"/>
</dbReference>
<dbReference type="PDB" id="6G5H">
    <property type="method" value="EM"/>
    <property type="resolution" value="3.60 A"/>
    <property type="chains" value="T=1-145"/>
</dbReference>
<dbReference type="PDB" id="6G5I">
    <property type="method" value="EM"/>
    <property type="resolution" value="3.50 A"/>
    <property type="chains" value="T=1-145"/>
</dbReference>
<dbReference type="PDB" id="6IP5">
    <property type="method" value="EM"/>
    <property type="resolution" value="3.90 A"/>
    <property type="chains" value="20=1-145"/>
</dbReference>
<dbReference type="PDB" id="6IP6">
    <property type="method" value="EM"/>
    <property type="resolution" value="4.50 A"/>
    <property type="chains" value="20=1-145"/>
</dbReference>
<dbReference type="PDB" id="6IP8">
    <property type="method" value="EM"/>
    <property type="resolution" value="3.90 A"/>
    <property type="chains" value="20=1-145"/>
</dbReference>
<dbReference type="PDB" id="6OLE">
    <property type="method" value="EM"/>
    <property type="resolution" value="3.10 A"/>
    <property type="chains" value="ST=2-144"/>
</dbReference>
<dbReference type="PDB" id="6OLF">
    <property type="method" value="EM"/>
    <property type="resolution" value="3.90 A"/>
    <property type="chains" value="ST=2-144"/>
</dbReference>
<dbReference type="PDB" id="6OLG">
    <property type="method" value="EM"/>
    <property type="resolution" value="3.40 A"/>
    <property type="chains" value="BT=2-144"/>
</dbReference>
<dbReference type="PDB" id="6OLI">
    <property type="method" value="EM"/>
    <property type="resolution" value="3.50 A"/>
    <property type="chains" value="ST=2-144"/>
</dbReference>
<dbReference type="PDB" id="6OLZ">
    <property type="method" value="EM"/>
    <property type="resolution" value="3.90 A"/>
    <property type="chains" value="BT=2-144"/>
</dbReference>
<dbReference type="PDB" id="6OM0">
    <property type="method" value="EM"/>
    <property type="resolution" value="3.10 A"/>
    <property type="chains" value="ST=2-144"/>
</dbReference>
<dbReference type="PDB" id="6OM7">
    <property type="method" value="EM"/>
    <property type="resolution" value="3.70 A"/>
    <property type="chains" value="ST=2-144"/>
</dbReference>
<dbReference type="PDB" id="6QZP">
    <property type="method" value="EM"/>
    <property type="resolution" value="2.90 A"/>
    <property type="chains" value="ST=2-144"/>
</dbReference>
<dbReference type="PDB" id="6XA1">
    <property type="method" value="EM"/>
    <property type="resolution" value="2.80 A"/>
    <property type="chains" value="ST=2-142"/>
</dbReference>
<dbReference type="PDB" id="6Y0G">
    <property type="method" value="EM"/>
    <property type="resolution" value="3.20 A"/>
    <property type="chains" value="ST=1-145"/>
</dbReference>
<dbReference type="PDB" id="6Y2L">
    <property type="method" value="EM"/>
    <property type="resolution" value="3.00 A"/>
    <property type="chains" value="ST=1-145"/>
</dbReference>
<dbReference type="PDB" id="6Y57">
    <property type="method" value="EM"/>
    <property type="resolution" value="3.50 A"/>
    <property type="chains" value="ST=1-145"/>
</dbReference>
<dbReference type="PDB" id="6YBS">
    <property type="method" value="EM"/>
    <property type="resolution" value="3.10 A"/>
    <property type="chains" value="d=1-145"/>
</dbReference>
<dbReference type="PDB" id="6Z6L">
    <property type="method" value="EM"/>
    <property type="resolution" value="3.00 A"/>
    <property type="chains" value="ST=1-145"/>
</dbReference>
<dbReference type="PDB" id="6Z6M">
    <property type="method" value="EM"/>
    <property type="resolution" value="3.10 A"/>
    <property type="chains" value="ST=1-145"/>
</dbReference>
<dbReference type="PDB" id="6Z6N">
    <property type="method" value="EM"/>
    <property type="resolution" value="2.90 A"/>
    <property type="chains" value="ST=1-145"/>
</dbReference>
<dbReference type="PDB" id="6ZLW">
    <property type="method" value="EM"/>
    <property type="resolution" value="2.60 A"/>
    <property type="chains" value="U=1-145"/>
</dbReference>
<dbReference type="PDB" id="6ZM7">
    <property type="method" value="EM"/>
    <property type="resolution" value="2.70 A"/>
    <property type="chains" value="ST=1-145"/>
</dbReference>
<dbReference type="PDB" id="6ZME">
    <property type="method" value="EM"/>
    <property type="resolution" value="3.00 A"/>
    <property type="chains" value="ST=1-145"/>
</dbReference>
<dbReference type="PDB" id="6ZMI">
    <property type="method" value="EM"/>
    <property type="resolution" value="2.60 A"/>
    <property type="chains" value="ST=1-145"/>
</dbReference>
<dbReference type="PDB" id="6ZMO">
    <property type="method" value="EM"/>
    <property type="resolution" value="3.10 A"/>
    <property type="chains" value="ST=1-145"/>
</dbReference>
<dbReference type="PDB" id="6ZMT">
    <property type="method" value="EM"/>
    <property type="resolution" value="3.00 A"/>
    <property type="chains" value="U=1-145"/>
</dbReference>
<dbReference type="PDB" id="6ZMW">
    <property type="method" value="EM"/>
    <property type="resolution" value="3.70 A"/>
    <property type="chains" value="d=1-145"/>
</dbReference>
<dbReference type="PDB" id="6ZN5">
    <property type="method" value="EM"/>
    <property type="resolution" value="3.20 A"/>
    <property type="chains" value="U=2-145"/>
</dbReference>
<dbReference type="PDB" id="6ZOJ">
    <property type="method" value="EM"/>
    <property type="resolution" value="2.80 A"/>
    <property type="chains" value="T=1-145"/>
</dbReference>
<dbReference type="PDB" id="6ZOL">
    <property type="method" value="EM"/>
    <property type="resolution" value="2.80 A"/>
    <property type="chains" value="T=1-145"/>
</dbReference>
<dbReference type="PDB" id="6ZON">
    <property type="method" value="EM"/>
    <property type="resolution" value="3.00 A"/>
    <property type="chains" value="x=1-145"/>
</dbReference>
<dbReference type="PDB" id="6ZP4">
    <property type="method" value="EM"/>
    <property type="resolution" value="2.90 A"/>
    <property type="chains" value="x=1-145"/>
</dbReference>
<dbReference type="PDB" id="6ZUO">
    <property type="method" value="EM"/>
    <property type="resolution" value="3.10 A"/>
    <property type="chains" value="T=1-145"/>
</dbReference>
<dbReference type="PDB" id="6ZV6">
    <property type="method" value="EM"/>
    <property type="resolution" value="2.90 A"/>
    <property type="chains" value="T=1-145"/>
</dbReference>
<dbReference type="PDB" id="6ZVH">
    <property type="method" value="EM"/>
    <property type="resolution" value="2.90 A"/>
    <property type="chains" value="T=2-144"/>
</dbReference>
<dbReference type="PDB" id="6ZVJ">
    <property type="method" value="EM"/>
    <property type="resolution" value="3.80 A"/>
    <property type="chains" value="x=2-142"/>
</dbReference>
<dbReference type="PDB" id="6ZXD">
    <property type="method" value="EM"/>
    <property type="resolution" value="3.20 A"/>
    <property type="chains" value="T=1-145"/>
</dbReference>
<dbReference type="PDB" id="6ZXE">
    <property type="method" value="EM"/>
    <property type="resolution" value="3.00 A"/>
    <property type="chains" value="T=1-145"/>
</dbReference>
<dbReference type="PDB" id="6ZXF">
    <property type="method" value="EM"/>
    <property type="resolution" value="3.70 A"/>
    <property type="chains" value="T=1-145"/>
</dbReference>
<dbReference type="PDB" id="6ZXG">
    <property type="method" value="EM"/>
    <property type="resolution" value="2.60 A"/>
    <property type="chains" value="T=1-145"/>
</dbReference>
<dbReference type="PDB" id="6ZXH">
    <property type="method" value="EM"/>
    <property type="resolution" value="2.70 A"/>
    <property type="chains" value="T=1-145"/>
</dbReference>
<dbReference type="PDB" id="7A09">
    <property type="method" value="EM"/>
    <property type="resolution" value="3.50 A"/>
    <property type="chains" value="x=1-145"/>
</dbReference>
<dbReference type="PDB" id="7K5I">
    <property type="method" value="EM"/>
    <property type="resolution" value="2.90 A"/>
    <property type="chains" value="T=1-145"/>
</dbReference>
<dbReference type="PDB" id="7MQA">
    <property type="method" value="EM"/>
    <property type="resolution" value="2.70 A"/>
    <property type="chains" value="NP=1-145"/>
</dbReference>
<dbReference type="PDB" id="7QP6">
    <property type="method" value="EM"/>
    <property type="resolution" value="4.70 A"/>
    <property type="chains" value="d=1-145"/>
</dbReference>
<dbReference type="PDB" id="7QP7">
    <property type="method" value="EM"/>
    <property type="resolution" value="3.70 A"/>
    <property type="chains" value="d=1-145"/>
</dbReference>
<dbReference type="PDB" id="7R4X">
    <property type="method" value="EM"/>
    <property type="resolution" value="2.15 A"/>
    <property type="chains" value="T=1-145"/>
</dbReference>
<dbReference type="PDB" id="7TQL">
    <property type="method" value="EM"/>
    <property type="resolution" value="3.40 A"/>
    <property type="chains" value="U=4-142"/>
</dbReference>
<dbReference type="PDB" id="7WTT">
    <property type="method" value="EM"/>
    <property type="resolution" value="3.10 A"/>
    <property type="chains" value="T=1-145"/>
</dbReference>
<dbReference type="PDB" id="7WTU">
    <property type="method" value="EM"/>
    <property type="resolution" value="3.00 A"/>
    <property type="chains" value="T=1-145"/>
</dbReference>
<dbReference type="PDB" id="7WTV">
    <property type="method" value="EM"/>
    <property type="resolution" value="3.50 A"/>
    <property type="chains" value="T=1-145"/>
</dbReference>
<dbReference type="PDB" id="7WTW">
    <property type="method" value="EM"/>
    <property type="resolution" value="3.20 A"/>
    <property type="chains" value="T=1-145"/>
</dbReference>
<dbReference type="PDB" id="7WTX">
    <property type="method" value="EM"/>
    <property type="resolution" value="3.10 A"/>
    <property type="chains" value="T=1-145"/>
</dbReference>
<dbReference type="PDB" id="7WTZ">
    <property type="method" value="EM"/>
    <property type="resolution" value="3.00 A"/>
    <property type="chains" value="T=1-145"/>
</dbReference>
<dbReference type="PDB" id="7WU0">
    <property type="method" value="EM"/>
    <property type="resolution" value="3.30 A"/>
    <property type="chains" value="T=1-145"/>
</dbReference>
<dbReference type="PDB" id="7XNX">
    <property type="method" value="EM"/>
    <property type="resolution" value="2.70 A"/>
    <property type="chains" value="ST=1-145"/>
</dbReference>
<dbReference type="PDB" id="7XNY">
    <property type="method" value="EM"/>
    <property type="resolution" value="2.50 A"/>
    <property type="chains" value="ST=1-145"/>
</dbReference>
<dbReference type="PDB" id="8G5Y">
    <property type="method" value="EM"/>
    <property type="resolution" value="2.29 A"/>
    <property type="chains" value="ST=1-145"/>
</dbReference>
<dbReference type="PDB" id="8G5Z">
    <property type="method" value="EM"/>
    <property type="resolution" value="2.64 A"/>
    <property type="chains" value="ST=2-144"/>
</dbReference>
<dbReference type="PDB" id="8G60">
    <property type="method" value="EM"/>
    <property type="resolution" value="2.54 A"/>
    <property type="chains" value="ST=1-145"/>
</dbReference>
<dbReference type="PDB" id="8G61">
    <property type="method" value="EM"/>
    <property type="resolution" value="2.94 A"/>
    <property type="chains" value="ST=1-145"/>
</dbReference>
<dbReference type="PDB" id="8G6J">
    <property type="method" value="EM"/>
    <property type="resolution" value="2.80 A"/>
    <property type="chains" value="ST=1-145"/>
</dbReference>
<dbReference type="PDB" id="8GLP">
    <property type="method" value="EM"/>
    <property type="resolution" value="1.67 A"/>
    <property type="chains" value="ST=1-145"/>
</dbReference>
<dbReference type="PDB" id="8IFD">
    <property type="method" value="EM"/>
    <property type="resolution" value="2.59 A"/>
    <property type="chains" value="20=1-145"/>
</dbReference>
<dbReference type="PDB" id="8IFE">
    <property type="method" value="EM"/>
    <property type="resolution" value="2.57 A"/>
    <property type="chains" value="20=1-145"/>
</dbReference>
<dbReference type="PDB" id="8JDJ">
    <property type="method" value="EM"/>
    <property type="resolution" value="2.50 A"/>
    <property type="chains" value="AF=1-145"/>
</dbReference>
<dbReference type="PDB" id="8JDK">
    <property type="method" value="EM"/>
    <property type="resolution" value="2.26 A"/>
    <property type="chains" value="AF=1-145"/>
</dbReference>
<dbReference type="PDB" id="8JDL">
    <property type="method" value="EM"/>
    <property type="resolution" value="2.42 A"/>
    <property type="chains" value="AF=1-145"/>
</dbReference>
<dbReference type="PDB" id="8JDM">
    <property type="method" value="EM"/>
    <property type="resolution" value="2.67 A"/>
    <property type="chains" value="AF=1-145"/>
</dbReference>
<dbReference type="PDB" id="8K2C">
    <property type="method" value="EM"/>
    <property type="resolution" value="2.40 A"/>
    <property type="chains" value="ST=1-145"/>
</dbReference>
<dbReference type="PDB" id="8OZ0">
    <property type="method" value="EM"/>
    <property type="resolution" value="3.50 A"/>
    <property type="chains" value="l=1-145"/>
</dbReference>
<dbReference type="PDB" id="8PJ1">
    <property type="method" value="EM"/>
    <property type="resolution" value="3.40 A"/>
    <property type="chains" value="d=1-145"/>
</dbReference>
<dbReference type="PDB" id="8PJ2">
    <property type="method" value="EM"/>
    <property type="resolution" value="3.40 A"/>
    <property type="chains" value="d=1-145"/>
</dbReference>
<dbReference type="PDB" id="8PJ3">
    <property type="method" value="EM"/>
    <property type="resolution" value="3.70 A"/>
    <property type="chains" value="d=1-145"/>
</dbReference>
<dbReference type="PDB" id="8PJ4">
    <property type="method" value="EM"/>
    <property type="resolution" value="3.20 A"/>
    <property type="chains" value="d=1-145"/>
</dbReference>
<dbReference type="PDB" id="8PJ5">
    <property type="method" value="EM"/>
    <property type="resolution" value="2.90 A"/>
    <property type="chains" value="d=1-145"/>
</dbReference>
<dbReference type="PDB" id="8PJ6">
    <property type="method" value="EM"/>
    <property type="resolution" value="2.90 A"/>
    <property type="chains" value="d=1-145"/>
</dbReference>
<dbReference type="PDB" id="8PPK">
    <property type="method" value="EM"/>
    <property type="resolution" value="2.98 A"/>
    <property type="chains" value="T=1-145"/>
</dbReference>
<dbReference type="PDB" id="8PPL">
    <property type="method" value="EM"/>
    <property type="resolution" value="2.65 A"/>
    <property type="chains" value="AT=1-145"/>
</dbReference>
<dbReference type="PDB" id="8QOI">
    <property type="method" value="EM"/>
    <property type="resolution" value="1.90 A"/>
    <property type="chains" value="ST=1-145"/>
</dbReference>
<dbReference type="PDB" id="8T4S">
    <property type="method" value="EM"/>
    <property type="resolution" value="2.60 A"/>
    <property type="chains" value="T=1-145"/>
</dbReference>
<dbReference type="PDB" id="8UKB">
    <property type="method" value="EM"/>
    <property type="resolution" value="3.05 A"/>
    <property type="chains" value="ST=2-144"/>
</dbReference>
<dbReference type="PDB" id="8XP2">
    <property type="method" value="EM"/>
    <property type="resolution" value="3.20 A"/>
    <property type="chains" value="ST=1-145"/>
</dbReference>
<dbReference type="PDB" id="8XP3">
    <property type="method" value="EM"/>
    <property type="resolution" value="3.40 A"/>
    <property type="chains" value="ST=1-145"/>
</dbReference>
<dbReference type="PDB" id="8XSX">
    <property type="method" value="EM"/>
    <property type="resolution" value="2.40 A"/>
    <property type="chains" value="ST=1-145"/>
</dbReference>
<dbReference type="PDB" id="8XSY">
    <property type="method" value="EM"/>
    <property type="resolution" value="3.00 A"/>
    <property type="chains" value="ST=1-145"/>
</dbReference>
<dbReference type="PDB" id="8XSZ">
    <property type="method" value="EM"/>
    <property type="resolution" value="3.20 A"/>
    <property type="chains" value="ST=1-145"/>
</dbReference>
<dbReference type="PDB" id="8XXL">
    <property type="method" value="EM"/>
    <property type="resolution" value="2.90 A"/>
    <property type="chains" value="ST=1-145"/>
</dbReference>
<dbReference type="PDB" id="8XXM">
    <property type="method" value="EM"/>
    <property type="resolution" value="3.20 A"/>
    <property type="chains" value="ST=1-145"/>
</dbReference>
<dbReference type="PDB" id="8XXN">
    <property type="method" value="EM"/>
    <property type="resolution" value="3.60 A"/>
    <property type="chains" value="ST=1-145"/>
</dbReference>
<dbReference type="PDB" id="8Y0W">
    <property type="method" value="EM"/>
    <property type="resolution" value="3.40 A"/>
    <property type="chains" value="ST=1-145"/>
</dbReference>
<dbReference type="PDB" id="8Y0X">
    <property type="method" value="EM"/>
    <property type="resolution" value="3.30 A"/>
    <property type="chains" value="ST=1-145"/>
</dbReference>
<dbReference type="PDB" id="8YOO">
    <property type="method" value="EM"/>
    <property type="resolution" value="2.00 A"/>
    <property type="chains" value="ST=1-145"/>
</dbReference>
<dbReference type="PDB" id="8YOP">
    <property type="method" value="EM"/>
    <property type="resolution" value="2.20 A"/>
    <property type="chains" value="ST=1-145"/>
</dbReference>
<dbReference type="PDB" id="8ZDB">
    <property type="method" value="EM"/>
    <property type="resolution" value="3.60 A"/>
    <property type="chains" value="T=1-145"/>
</dbReference>
<dbReference type="PDB" id="8ZDC">
    <property type="method" value="EM"/>
    <property type="resolution" value="3.80 A"/>
    <property type="chains" value="T=1-145"/>
</dbReference>
<dbReference type="PDB" id="8ZDD">
    <property type="method" value="EM"/>
    <property type="resolution" value="3.70 A"/>
    <property type="chains" value="T=1-145"/>
</dbReference>
<dbReference type="PDB" id="9BKD">
    <property type="method" value="EM"/>
    <property type="resolution" value="2.60 A"/>
    <property type="chains" value="d=1-145"/>
</dbReference>
<dbReference type="PDB" id="9BLN">
    <property type="method" value="EM"/>
    <property type="resolution" value="3.90 A"/>
    <property type="chains" value="d=1-145"/>
</dbReference>
<dbReference type="PDB" id="9C3H">
    <property type="method" value="EM"/>
    <property type="resolution" value="2.00 A"/>
    <property type="chains" value="SU=1-145"/>
</dbReference>
<dbReference type="PDB" id="9G8M">
    <property type="method" value="EM"/>
    <property type="resolution" value="3.30 A"/>
    <property type="chains" value="ST=1-145"/>
</dbReference>
<dbReference type="PDB" id="9G8O">
    <property type="method" value="EM"/>
    <property type="resolution" value="3.40 A"/>
    <property type="chains" value="ST=1-145"/>
</dbReference>
<dbReference type="PDBsum" id="4UG0"/>
<dbReference type="PDBsum" id="4V6X"/>
<dbReference type="PDBsum" id="5A2Q"/>
<dbReference type="PDBsum" id="5AJ0"/>
<dbReference type="PDBsum" id="5FLX"/>
<dbReference type="PDBsum" id="5LKS"/>
<dbReference type="PDBsum" id="5OA3"/>
<dbReference type="PDBsum" id="5T2C"/>
<dbReference type="PDBsum" id="5VYC"/>
<dbReference type="PDBsum" id="6G18"/>
<dbReference type="PDBsum" id="6G4S"/>
<dbReference type="PDBsum" id="6G4W"/>
<dbReference type="PDBsum" id="6G51"/>
<dbReference type="PDBsum" id="6G53"/>
<dbReference type="PDBsum" id="6G5H"/>
<dbReference type="PDBsum" id="6G5I"/>
<dbReference type="PDBsum" id="6IP5"/>
<dbReference type="PDBsum" id="6IP6"/>
<dbReference type="PDBsum" id="6IP8"/>
<dbReference type="PDBsum" id="6OLE"/>
<dbReference type="PDBsum" id="6OLF"/>
<dbReference type="PDBsum" id="6OLG"/>
<dbReference type="PDBsum" id="6OLI"/>
<dbReference type="PDBsum" id="6OLZ"/>
<dbReference type="PDBsum" id="6OM0"/>
<dbReference type="PDBsum" id="6OM7"/>
<dbReference type="PDBsum" id="6QZP"/>
<dbReference type="PDBsum" id="6XA1"/>
<dbReference type="PDBsum" id="6Y0G"/>
<dbReference type="PDBsum" id="6Y2L"/>
<dbReference type="PDBsum" id="6Y57"/>
<dbReference type="PDBsum" id="6YBS"/>
<dbReference type="PDBsum" id="6Z6L"/>
<dbReference type="PDBsum" id="6Z6M"/>
<dbReference type="PDBsum" id="6Z6N"/>
<dbReference type="PDBsum" id="6ZLW"/>
<dbReference type="PDBsum" id="6ZM7"/>
<dbReference type="PDBsum" id="6ZME"/>
<dbReference type="PDBsum" id="6ZMI"/>
<dbReference type="PDBsum" id="6ZMO"/>
<dbReference type="PDBsum" id="6ZMT"/>
<dbReference type="PDBsum" id="6ZMW"/>
<dbReference type="PDBsum" id="6ZN5"/>
<dbReference type="PDBsum" id="6ZOJ"/>
<dbReference type="PDBsum" id="6ZOL"/>
<dbReference type="PDBsum" id="6ZON"/>
<dbReference type="PDBsum" id="6ZP4"/>
<dbReference type="PDBsum" id="6ZUO"/>
<dbReference type="PDBsum" id="6ZV6"/>
<dbReference type="PDBsum" id="6ZVH"/>
<dbReference type="PDBsum" id="6ZVJ"/>
<dbReference type="PDBsum" id="6ZXD"/>
<dbReference type="PDBsum" id="6ZXE"/>
<dbReference type="PDBsum" id="6ZXF"/>
<dbReference type="PDBsum" id="6ZXG"/>
<dbReference type="PDBsum" id="6ZXH"/>
<dbReference type="PDBsum" id="7A09"/>
<dbReference type="PDBsum" id="7K5I"/>
<dbReference type="PDBsum" id="7MQA"/>
<dbReference type="PDBsum" id="7QP6"/>
<dbReference type="PDBsum" id="7QP7"/>
<dbReference type="PDBsum" id="7R4X"/>
<dbReference type="PDBsum" id="7TQL"/>
<dbReference type="PDBsum" id="7WTT"/>
<dbReference type="PDBsum" id="7WTU"/>
<dbReference type="PDBsum" id="7WTV"/>
<dbReference type="PDBsum" id="7WTW"/>
<dbReference type="PDBsum" id="7WTX"/>
<dbReference type="PDBsum" id="7WTZ"/>
<dbReference type="PDBsum" id="7WU0"/>
<dbReference type="PDBsum" id="7XNX"/>
<dbReference type="PDBsum" id="7XNY"/>
<dbReference type="PDBsum" id="8G5Y"/>
<dbReference type="PDBsum" id="8G5Z"/>
<dbReference type="PDBsum" id="8G60"/>
<dbReference type="PDBsum" id="8G61"/>
<dbReference type="PDBsum" id="8G6J"/>
<dbReference type="PDBsum" id="8GLP"/>
<dbReference type="PDBsum" id="8IFD"/>
<dbReference type="PDBsum" id="8IFE"/>
<dbReference type="PDBsum" id="8JDJ"/>
<dbReference type="PDBsum" id="8JDK"/>
<dbReference type="PDBsum" id="8JDL"/>
<dbReference type="PDBsum" id="8JDM"/>
<dbReference type="PDBsum" id="8K2C"/>
<dbReference type="PDBsum" id="8OZ0"/>
<dbReference type="PDBsum" id="8PJ1"/>
<dbReference type="PDBsum" id="8PJ2"/>
<dbReference type="PDBsum" id="8PJ3"/>
<dbReference type="PDBsum" id="8PJ4"/>
<dbReference type="PDBsum" id="8PJ5"/>
<dbReference type="PDBsum" id="8PJ6"/>
<dbReference type="PDBsum" id="8PPK"/>
<dbReference type="PDBsum" id="8PPL"/>
<dbReference type="PDBsum" id="8QOI"/>
<dbReference type="PDBsum" id="8T4S"/>
<dbReference type="PDBsum" id="8UKB"/>
<dbReference type="PDBsum" id="8XP2"/>
<dbReference type="PDBsum" id="8XP3"/>
<dbReference type="PDBsum" id="8XSX"/>
<dbReference type="PDBsum" id="8XSY"/>
<dbReference type="PDBsum" id="8XSZ"/>
<dbReference type="PDBsum" id="8XXL"/>
<dbReference type="PDBsum" id="8XXM"/>
<dbReference type="PDBsum" id="8XXN"/>
<dbReference type="PDBsum" id="8Y0W"/>
<dbReference type="PDBsum" id="8Y0X"/>
<dbReference type="PDBsum" id="8YOO"/>
<dbReference type="PDBsum" id="8YOP"/>
<dbReference type="PDBsum" id="8ZDB"/>
<dbReference type="PDBsum" id="8ZDC"/>
<dbReference type="PDBsum" id="8ZDD"/>
<dbReference type="PDBsum" id="9BKD"/>
<dbReference type="PDBsum" id="9BLN"/>
<dbReference type="PDBsum" id="9C3H"/>
<dbReference type="PDBsum" id="9G8M"/>
<dbReference type="PDBsum" id="9G8O"/>
<dbReference type="EMDB" id="EMD-10668"/>
<dbReference type="EMDB" id="EMD-10674"/>
<dbReference type="EMDB" id="EMD-10690"/>
<dbReference type="EMDB" id="EMD-10772"/>
<dbReference type="EMDB" id="EMD-11098"/>
<dbReference type="EMDB" id="EMD-11099"/>
<dbReference type="EMDB" id="EMD-11100"/>
<dbReference type="EMDB" id="EMD-11276"/>
<dbReference type="EMDB" id="EMD-11288"/>
<dbReference type="EMDB" id="EMD-11289"/>
<dbReference type="EMDB" id="EMD-11292"/>
<dbReference type="EMDB" id="EMD-11299"/>
<dbReference type="EMDB" id="EMD-11301"/>
<dbReference type="EMDB" id="EMD-11302"/>
<dbReference type="EMDB" id="EMD-11310"/>
<dbReference type="EMDB" id="EMD-11320"/>
<dbReference type="EMDB" id="EMD-11322"/>
<dbReference type="EMDB" id="EMD-11325"/>
<dbReference type="EMDB" id="EMD-11335"/>
<dbReference type="EMDB" id="EMD-11440"/>
<dbReference type="EMDB" id="EMD-11441"/>
<dbReference type="EMDB" id="EMD-11456"/>
<dbReference type="EMDB" id="EMD-11458"/>
<dbReference type="EMDB" id="EMD-11517"/>
<dbReference type="EMDB" id="EMD-11518"/>
<dbReference type="EMDB" id="EMD-11519"/>
<dbReference type="EMDB" id="EMD-11520"/>
<dbReference type="EMDB" id="EMD-11521"/>
<dbReference type="EMDB" id="EMD-11602"/>
<dbReference type="EMDB" id="EMD-14113"/>
<dbReference type="EMDB" id="EMD-14114"/>
<dbReference type="EMDB" id="EMD-14317"/>
<dbReference type="EMDB" id="EMD-17297"/>
<dbReference type="EMDB" id="EMD-17696"/>
<dbReference type="EMDB" id="EMD-17697"/>
<dbReference type="EMDB" id="EMD-17698"/>
<dbReference type="EMDB" id="EMD-17699"/>
<dbReference type="EMDB" id="EMD-17700"/>
<dbReference type="EMDB" id="EMD-17701"/>
<dbReference type="EMDB" id="EMD-17804"/>
<dbReference type="EMDB" id="EMD-17805"/>
<dbReference type="EMDB" id="EMD-18539"/>
<dbReference type="EMDB" id="EMD-22681"/>
<dbReference type="EMDB" id="EMD-23938"/>
<dbReference type="EMDB" id="EMD-26067"/>
<dbReference type="EMDB" id="EMD-29757"/>
<dbReference type="EMDB" id="EMD-29758"/>
<dbReference type="EMDB" id="EMD-29759"/>
<dbReference type="EMDB" id="EMD-29760"/>
<dbReference type="EMDB" id="EMD-29771"/>
<dbReference type="EMDB" id="EMD-32800"/>
<dbReference type="EMDB" id="EMD-32801"/>
<dbReference type="EMDB" id="EMD-32802"/>
<dbReference type="EMDB" id="EMD-32803"/>
<dbReference type="EMDB" id="EMD-32804"/>
<dbReference type="EMDB" id="EMD-32806"/>
<dbReference type="EMDB" id="EMD-32807"/>
<dbReference type="EMDB" id="EMD-33329"/>
<dbReference type="EMDB" id="EMD-33330"/>
<dbReference type="EMDB" id="EMD-35413"/>
<dbReference type="EMDB" id="EMD-35414"/>
<dbReference type="EMDB" id="EMD-36178"/>
<dbReference type="EMDB" id="EMD-36179"/>
<dbReference type="EMDB" id="EMD-36180"/>
<dbReference type="EMDB" id="EMD-36181"/>
<dbReference type="EMDB" id="EMD-36838"/>
<dbReference type="EMDB" id="EMD-3770"/>
<dbReference type="EMDB" id="EMD-38548"/>
<dbReference type="EMDB" id="EMD-38549"/>
<dbReference type="EMDB" id="EMD-38629"/>
<dbReference type="EMDB" id="EMD-38630"/>
<dbReference type="EMDB" id="EMD-38631"/>
<dbReference type="EMDB" id="EMD-38752"/>
<dbReference type="EMDB" id="EMD-38753"/>
<dbReference type="EMDB" id="EMD-38754"/>
<dbReference type="EMDB" id="EMD-3883"/>
<dbReference type="EMDB" id="EMD-39455"/>
<dbReference type="EMDB" id="EMD-39456"/>
<dbReference type="EMDB" id="EMD-39956"/>
<dbReference type="EMDB" id="EMD-39957"/>
<dbReference type="EMDB" id="EMD-39958"/>
<dbReference type="EMDB" id="EMD-40205"/>
<dbReference type="EMDB" id="EMD-4070"/>
<dbReference type="EMDB" id="EMD-41039"/>
<dbReference type="EMDB" id="EMD-42351"/>
<dbReference type="EMDB" id="EMD-4337"/>
<dbReference type="EMDB" id="EMD-4348"/>
<dbReference type="EMDB" id="EMD-4349"/>
<dbReference type="EMDB" id="EMD-4350"/>
<dbReference type="EMDB" id="EMD-4351"/>
<dbReference type="EMDB" id="EMD-4352"/>
<dbReference type="EMDB" id="EMD-4353"/>
<dbReference type="EMDB" id="EMD-44641"/>
<dbReference type="EMDB" id="EMD-44671"/>
<dbReference type="EMDB" id="EMD-45170"/>
<dbReference type="EMDB" id="EMD-51132"/>
<dbReference type="EMDB" id="EMD-51134"/>
<dbReference type="EMDB" id="EMD-9701"/>
<dbReference type="EMDB" id="EMD-9702"/>
<dbReference type="EMDB" id="EMD-9703"/>
<dbReference type="SMR" id="P39019"/>
<dbReference type="BioGRID" id="112137">
    <property type="interactions" value="666"/>
</dbReference>
<dbReference type="ComplexPortal" id="CPX-5223">
    <property type="entry name" value="40S cytosolic small ribosomal subunit"/>
</dbReference>
<dbReference type="CORUM" id="P39019"/>
<dbReference type="FunCoup" id="P39019">
    <property type="interactions" value="1670"/>
</dbReference>
<dbReference type="IntAct" id="P39019">
    <property type="interactions" value="322"/>
</dbReference>
<dbReference type="MINT" id="P39019"/>
<dbReference type="STRING" id="9606.ENSP00000470972"/>
<dbReference type="DrugBank" id="DB11638">
    <property type="generic name" value="Artenimol"/>
</dbReference>
<dbReference type="GlyGen" id="P39019">
    <property type="glycosylation" value="1 site, 1 O-linked glycan (1 site)"/>
</dbReference>
<dbReference type="iPTMnet" id="P39019"/>
<dbReference type="MetOSite" id="P39019"/>
<dbReference type="PhosphoSitePlus" id="P39019"/>
<dbReference type="SwissPalm" id="P39019"/>
<dbReference type="BioMuta" id="RPS19"/>
<dbReference type="DMDM" id="730640"/>
<dbReference type="CPTAC" id="CPTAC-436"/>
<dbReference type="CPTAC" id="CPTAC-437"/>
<dbReference type="jPOST" id="P39019"/>
<dbReference type="MassIVE" id="P39019"/>
<dbReference type="PaxDb" id="9606-ENSP00000470972"/>
<dbReference type="PeptideAtlas" id="P39019"/>
<dbReference type="ProteomicsDB" id="55308"/>
<dbReference type="Pumba" id="P39019"/>
<dbReference type="TopDownProteomics" id="P39019"/>
<dbReference type="Antibodypedia" id="30832">
    <property type="antibodies" value="343 antibodies from 34 providers"/>
</dbReference>
<dbReference type="DNASU" id="6223"/>
<dbReference type="Ensembl" id="ENST00000593863.5">
    <property type="protein sequence ID" value="ENSP00000470004.1"/>
    <property type="gene ID" value="ENSG00000105372.8"/>
</dbReference>
<dbReference type="Ensembl" id="ENST00000598742.6">
    <property type="protein sequence ID" value="ENSP00000470972.1"/>
    <property type="gene ID" value="ENSG00000105372.8"/>
</dbReference>
<dbReference type="Ensembl" id="ENST00000600467.6">
    <property type="protein sequence ID" value="ENSP00000469228.2"/>
    <property type="gene ID" value="ENSG00000105372.8"/>
</dbReference>
<dbReference type="GeneID" id="6223"/>
<dbReference type="KEGG" id="hsa:6223"/>
<dbReference type="MANE-Select" id="ENST00000598742.6">
    <property type="protein sequence ID" value="ENSP00000470972.1"/>
    <property type="RefSeq nucleotide sequence ID" value="NM_001022.4"/>
    <property type="RefSeq protein sequence ID" value="NP_001013.1"/>
</dbReference>
<dbReference type="UCSC" id="uc002ort.4">
    <property type="organism name" value="human"/>
</dbReference>
<dbReference type="AGR" id="HGNC:10402"/>
<dbReference type="CTD" id="6223"/>
<dbReference type="DisGeNET" id="6223"/>
<dbReference type="GeneCards" id="RPS19"/>
<dbReference type="GeneReviews" id="RPS19"/>
<dbReference type="HGNC" id="HGNC:10402">
    <property type="gene designation" value="RPS19"/>
</dbReference>
<dbReference type="HPA" id="ENSG00000105372">
    <property type="expression patterns" value="Low tissue specificity"/>
</dbReference>
<dbReference type="MalaCards" id="RPS19"/>
<dbReference type="MIM" id="105650">
    <property type="type" value="phenotype"/>
</dbReference>
<dbReference type="MIM" id="603474">
    <property type="type" value="gene"/>
</dbReference>
<dbReference type="neXtProt" id="NX_P39019"/>
<dbReference type="OpenTargets" id="ENSG00000105372"/>
<dbReference type="Orphanet" id="124">
    <property type="disease" value="Diamond-Blackfan anemia"/>
</dbReference>
<dbReference type="PharmGKB" id="PA34803"/>
<dbReference type="VEuPathDB" id="HostDB:ENSG00000105372"/>
<dbReference type="eggNOG" id="KOG3411">
    <property type="taxonomic scope" value="Eukaryota"/>
</dbReference>
<dbReference type="GeneTree" id="ENSGT00390000013102"/>
<dbReference type="HOGENOM" id="CLU_108559_0_1_1"/>
<dbReference type="InParanoid" id="P39019"/>
<dbReference type="OMA" id="WAPFVKT"/>
<dbReference type="OrthoDB" id="428974at2759"/>
<dbReference type="PAN-GO" id="P39019">
    <property type="GO annotations" value="4 GO annotations based on evolutionary models"/>
</dbReference>
<dbReference type="PhylomeDB" id="P39019"/>
<dbReference type="TreeFam" id="TF315008"/>
<dbReference type="PathwayCommons" id="P39019"/>
<dbReference type="Reactome" id="R-HSA-156827">
    <property type="pathway name" value="L13a-mediated translational silencing of Ceruloplasmin expression"/>
</dbReference>
<dbReference type="Reactome" id="R-HSA-156902">
    <property type="pathway name" value="Peptide chain elongation"/>
</dbReference>
<dbReference type="Reactome" id="R-HSA-1799339">
    <property type="pathway name" value="SRP-dependent cotranslational protein targeting to membrane"/>
</dbReference>
<dbReference type="Reactome" id="R-HSA-192823">
    <property type="pathway name" value="Viral mRNA Translation"/>
</dbReference>
<dbReference type="Reactome" id="R-HSA-2408557">
    <property type="pathway name" value="Selenocysteine synthesis"/>
</dbReference>
<dbReference type="Reactome" id="R-HSA-6791226">
    <property type="pathway name" value="Major pathway of rRNA processing in the nucleolus and cytosol"/>
</dbReference>
<dbReference type="Reactome" id="R-HSA-72649">
    <property type="pathway name" value="Translation initiation complex formation"/>
</dbReference>
<dbReference type="Reactome" id="R-HSA-72689">
    <property type="pathway name" value="Formation of a pool of free 40S subunits"/>
</dbReference>
<dbReference type="Reactome" id="R-HSA-72695">
    <property type="pathway name" value="Formation of the ternary complex, and subsequently, the 43S complex"/>
</dbReference>
<dbReference type="Reactome" id="R-HSA-72702">
    <property type="pathway name" value="Ribosomal scanning and start codon recognition"/>
</dbReference>
<dbReference type="Reactome" id="R-HSA-72706">
    <property type="pathway name" value="GTP hydrolysis and joining of the 60S ribosomal subunit"/>
</dbReference>
<dbReference type="Reactome" id="R-HSA-72764">
    <property type="pathway name" value="Eukaryotic Translation Termination"/>
</dbReference>
<dbReference type="Reactome" id="R-HSA-9010553">
    <property type="pathway name" value="Regulation of expression of SLITs and ROBOs"/>
</dbReference>
<dbReference type="Reactome" id="R-HSA-9633012">
    <property type="pathway name" value="Response of EIF2AK4 (GCN2) to amino acid deficiency"/>
</dbReference>
<dbReference type="Reactome" id="R-HSA-9735869">
    <property type="pathway name" value="SARS-CoV-1 modulates host translation machinery"/>
</dbReference>
<dbReference type="Reactome" id="R-HSA-9754678">
    <property type="pathway name" value="SARS-CoV-2 modulates host translation machinery"/>
</dbReference>
<dbReference type="Reactome" id="R-HSA-975956">
    <property type="pathway name" value="Nonsense Mediated Decay (NMD) independent of the Exon Junction Complex (EJC)"/>
</dbReference>
<dbReference type="Reactome" id="R-HSA-975957">
    <property type="pathway name" value="Nonsense Mediated Decay (NMD) enhanced by the Exon Junction Complex (EJC)"/>
</dbReference>
<dbReference type="SignaLink" id="P39019"/>
<dbReference type="SIGNOR" id="P39019"/>
<dbReference type="BioGRID-ORCS" id="6223">
    <property type="hits" value="850 hits in 1131 CRISPR screens"/>
</dbReference>
<dbReference type="CD-CODE" id="91857CE7">
    <property type="entry name" value="Nucleolus"/>
</dbReference>
<dbReference type="CD-CODE" id="DEE660B4">
    <property type="entry name" value="Stress granule"/>
</dbReference>
<dbReference type="CD-CODE" id="FB4E32DD">
    <property type="entry name" value="Presynaptic clusters and postsynaptic densities"/>
</dbReference>
<dbReference type="ChiTaRS" id="RPS19">
    <property type="organism name" value="human"/>
</dbReference>
<dbReference type="EvolutionaryTrace" id="P39019"/>
<dbReference type="GeneWiki" id="Ribosomal_protein_S19"/>
<dbReference type="GenomeRNAi" id="6223"/>
<dbReference type="Pharos" id="P39019">
    <property type="development level" value="Tbio"/>
</dbReference>
<dbReference type="PRO" id="PR:P39019"/>
<dbReference type="Proteomes" id="UP000005640">
    <property type="component" value="Chromosome 19"/>
</dbReference>
<dbReference type="RNAct" id="P39019">
    <property type="molecule type" value="protein"/>
</dbReference>
<dbReference type="Bgee" id="ENSG00000105372">
    <property type="expression patterns" value="Expressed in upper leg skin and 211 other cell types or tissues"/>
</dbReference>
<dbReference type="ExpressionAtlas" id="P39019">
    <property type="expression patterns" value="baseline and differential"/>
</dbReference>
<dbReference type="GO" id="GO:0005737">
    <property type="term" value="C:cytoplasm"/>
    <property type="evidence" value="ECO:0000314"/>
    <property type="project" value="UniProtKB"/>
</dbReference>
<dbReference type="GO" id="GO:0005829">
    <property type="term" value="C:cytosol"/>
    <property type="evidence" value="ECO:0000314"/>
    <property type="project" value="UniProtKB"/>
</dbReference>
<dbReference type="GO" id="GO:0022626">
    <property type="term" value="C:cytosolic ribosome"/>
    <property type="evidence" value="ECO:0000314"/>
    <property type="project" value="FlyBase"/>
</dbReference>
<dbReference type="GO" id="GO:0022627">
    <property type="term" value="C:cytosolic small ribosomal subunit"/>
    <property type="evidence" value="ECO:0000314"/>
    <property type="project" value="UniProtKB"/>
</dbReference>
<dbReference type="GO" id="GO:0070062">
    <property type="term" value="C:extracellular exosome"/>
    <property type="evidence" value="ECO:0007005"/>
    <property type="project" value="UniProtKB"/>
</dbReference>
<dbReference type="GO" id="GO:0005925">
    <property type="term" value="C:focal adhesion"/>
    <property type="evidence" value="ECO:0007005"/>
    <property type="project" value="UniProtKB"/>
</dbReference>
<dbReference type="GO" id="GO:0016020">
    <property type="term" value="C:membrane"/>
    <property type="evidence" value="ECO:0007005"/>
    <property type="project" value="UniProtKB"/>
</dbReference>
<dbReference type="GO" id="GO:0005730">
    <property type="term" value="C:nucleolus"/>
    <property type="evidence" value="ECO:0000314"/>
    <property type="project" value="UniProtKB"/>
</dbReference>
<dbReference type="GO" id="GO:0005654">
    <property type="term" value="C:nucleoplasm"/>
    <property type="evidence" value="ECO:0000314"/>
    <property type="project" value="HPA"/>
</dbReference>
<dbReference type="GO" id="GO:0014069">
    <property type="term" value="C:postsynaptic density"/>
    <property type="evidence" value="ECO:0000314"/>
    <property type="project" value="SynGO"/>
</dbReference>
<dbReference type="GO" id="GO:0005840">
    <property type="term" value="C:ribosome"/>
    <property type="evidence" value="ECO:0000314"/>
    <property type="project" value="UniProtKB"/>
</dbReference>
<dbReference type="GO" id="GO:0032040">
    <property type="term" value="C:small-subunit processome"/>
    <property type="evidence" value="ECO:0000314"/>
    <property type="project" value="UniProtKB"/>
</dbReference>
<dbReference type="GO" id="GO:0017134">
    <property type="term" value="F:fibroblast growth factor binding"/>
    <property type="evidence" value="ECO:0000353"/>
    <property type="project" value="BHF-UCL"/>
</dbReference>
<dbReference type="GO" id="GO:0042802">
    <property type="term" value="F:identical protein binding"/>
    <property type="evidence" value="ECO:0000353"/>
    <property type="project" value="UniProtKB"/>
</dbReference>
<dbReference type="GO" id="GO:0019901">
    <property type="term" value="F:protein kinase binding"/>
    <property type="evidence" value="ECO:0000353"/>
    <property type="project" value="UniProtKB"/>
</dbReference>
<dbReference type="GO" id="GO:0003723">
    <property type="term" value="F:RNA binding"/>
    <property type="evidence" value="ECO:0007005"/>
    <property type="project" value="UniProtKB"/>
</dbReference>
<dbReference type="GO" id="GO:0003735">
    <property type="term" value="F:structural constituent of ribosome"/>
    <property type="evidence" value="ECO:0000314"/>
    <property type="project" value="FlyBase"/>
</dbReference>
<dbReference type="GO" id="GO:0061844">
    <property type="term" value="P:antimicrobial humoral immune response mediated by antimicrobial peptide"/>
    <property type="evidence" value="ECO:0000314"/>
    <property type="project" value="UniProtKB"/>
</dbReference>
<dbReference type="GO" id="GO:0002181">
    <property type="term" value="P:cytoplasmic translation"/>
    <property type="evidence" value="ECO:0000303"/>
    <property type="project" value="ComplexPortal"/>
</dbReference>
<dbReference type="GO" id="GO:0050829">
    <property type="term" value="P:defense response to Gram-negative bacterium"/>
    <property type="evidence" value="ECO:0000314"/>
    <property type="project" value="UniProtKB"/>
</dbReference>
<dbReference type="GO" id="GO:0030218">
    <property type="term" value="P:erythrocyte differentiation"/>
    <property type="evidence" value="ECO:0000315"/>
    <property type="project" value="HGNC-UCL"/>
</dbReference>
<dbReference type="GO" id="GO:0031640">
    <property type="term" value="P:killing of cells of another organism"/>
    <property type="evidence" value="ECO:0000314"/>
    <property type="project" value="UniProtKB"/>
</dbReference>
<dbReference type="GO" id="GO:0030490">
    <property type="term" value="P:maturation of SSU-rRNA"/>
    <property type="evidence" value="ECO:0000315"/>
    <property type="project" value="UniProtKB"/>
</dbReference>
<dbReference type="GO" id="GO:0000462">
    <property type="term" value="P:maturation of SSU-rRNA from tricistronic rRNA transcript (SSU-rRNA, 5.8S rRNA, LSU-rRNA)"/>
    <property type="evidence" value="ECO:0000315"/>
    <property type="project" value="UniProtKB"/>
</dbReference>
<dbReference type="GO" id="GO:0002548">
    <property type="term" value="P:monocyte chemotaxis"/>
    <property type="evidence" value="ECO:0000314"/>
    <property type="project" value="UniProtKB"/>
</dbReference>
<dbReference type="GO" id="GO:0060266">
    <property type="term" value="P:negative regulation of respiratory burst involved in inflammatory response"/>
    <property type="evidence" value="ECO:0000314"/>
    <property type="project" value="UniProtKB"/>
</dbReference>
<dbReference type="GO" id="GO:0007000">
    <property type="term" value="P:nucleolus organization"/>
    <property type="evidence" value="ECO:0000315"/>
    <property type="project" value="UniProtKB"/>
</dbReference>
<dbReference type="GO" id="GO:0060265">
    <property type="term" value="P:positive regulation of respiratory burst involved in inflammatory response"/>
    <property type="evidence" value="ECO:0000314"/>
    <property type="project" value="UniProtKB"/>
</dbReference>
<dbReference type="GO" id="GO:0000028">
    <property type="term" value="P:ribosomal small subunit assembly"/>
    <property type="evidence" value="ECO:0000315"/>
    <property type="project" value="UniProtKB"/>
</dbReference>
<dbReference type="GO" id="GO:0042274">
    <property type="term" value="P:ribosomal small subunit biogenesis"/>
    <property type="evidence" value="ECO:0000314"/>
    <property type="project" value="UniProtKB"/>
</dbReference>
<dbReference type="GO" id="GO:0006364">
    <property type="term" value="P:rRNA processing"/>
    <property type="evidence" value="ECO:0000315"/>
    <property type="project" value="UniProtKB"/>
</dbReference>
<dbReference type="GO" id="GO:0006412">
    <property type="term" value="P:translation"/>
    <property type="evidence" value="ECO:0000305"/>
    <property type="project" value="UniProtKB"/>
</dbReference>
<dbReference type="FunFam" id="1.10.10.10:FF:000255">
    <property type="entry name" value="40S ribosomal protein S19"/>
    <property type="match status" value="1"/>
</dbReference>
<dbReference type="Gene3D" id="1.10.10.10">
    <property type="entry name" value="Winged helix-like DNA-binding domain superfamily/Winged helix DNA-binding domain"/>
    <property type="match status" value="1"/>
</dbReference>
<dbReference type="InterPro" id="IPR001266">
    <property type="entry name" value="Ribosomal_eS19"/>
</dbReference>
<dbReference type="InterPro" id="IPR018277">
    <property type="entry name" value="Ribosomal_eS19_CS"/>
</dbReference>
<dbReference type="InterPro" id="IPR036388">
    <property type="entry name" value="WH-like_DNA-bd_sf"/>
</dbReference>
<dbReference type="InterPro" id="IPR036390">
    <property type="entry name" value="WH_DNA-bd_sf"/>
</dbReference>
<dbReference type="PANTHER" id="PTHR11710">
    <property type="entry name" value="40S RIBOSOMAL PROTEIN S19"/>
    <property type="match status" value="1"/>
</dbReference>
<dbReference type="PANTHER" id="PTHR11710:SF0">
    <property type="entry name" value="40S RIBOSOMAL PROTEIN S19"/>
    <property type="match status" value="1"/>
</dbReference>
<dbReference type="Pfam" id="PF01090">
    <property type="entry name" value="Ribosomal_S19e"/>
    <property type="match status" value="1"/>
</dbReference>
<dbReference type="SMART" id="SM01413">
    <property type="entry name" value="Ribosomal_S19e"/>
    <property type="match status" value="1"/>
</dbReference>
<dbReference type="SUPFAM" id="SSF46785">
    <property type="entry name" value="Winged helix' DNA-binding domain"/>
    <property type="match status" value="1"/>
</dbReference>
<dbReference type="PROSITE" id="PS00628">
    <property type="entry name" value="RIBOSOMAL_S19E"/>
    <property type="match status" value="1"/>
</dbReference>